<sequence length="268" mass="30488">MRGAFYIAIALLVVRSRTATEIDPTDISEPYLNVVAIGGEDTRTTPKRYLRDGLAHSAANEERVKANVLSKSAKTLAAETEDWLRLSLSIGGHSHTPKSKRKVNLSPAKSQSGIRKKSTSINKRNYDKQVQADDPRLPEYLQIHQTFLKIPGMPHKMSLTEAVVMYGMVNRKVASKPGTKKNNEPLLRLMERSKWEDFENALDPMFMRLAPHEEMRKEYFHRLHTMYAKVYTFCHAHPSACTNKRAVSPLEKMIKVQKTKALLPLFKS</sequence>
<name>RLR6_PLAVT</name>
<keyword id="KW-1035">Host cytoplasm</keyword>
<keyword id="KW-1048">Host nucleus</keyword>
<keyword id="KW-0964">Secreted</keyword>
<keyword id="KW-0732">Signal</keyword>
<keyword id="KW-0843">Virulence</keyword>
<dbReference type="GO" id="GO:0005576">
    <property type="term" value="C:extracellular region"/>
    <property type="evidence" value="ECO:0007669"/>
    <property type="project" value="UniProtKB-SubCell"/>
</dbReference>
<dbReference type="GO" id="GO:0030430">
    <property type="term" value="C:host cell cytoplasm"/>
    <property type="evidence" value="ECO:0007669"/>
    <property type="project" value="UniProtKB-SubCell"/>
</dbReference>
<dbReference type="GO" id="GO:0042025">
    <property type="term" value="C:host cell nucleus"/>
    <property type="evidence" value="ECO:0007669"/>
    <property type="project" value="UniProtKB-SubCell"/>
</dbReference>
<gene>
    <name evidence="4" type="primary">RXLR6</name>
</gene>
<accession>P0CU93</accession>
<comment type="function">
    <text evidence="3">Secreted effector that completely suppresses the host cell death induced by cell death-inducing proteins.</text>
</comment>
<comment type="subcellular location">
    <subcellularLocation>
        <location evidence="3">Secreted</location>
    </subcellularLocation>
    <subcellularLocation>
        <location evidence="3">Host nucleus</location>
    </subcellularLocation>
    <subcellularLocation>
        <location evidence="3">Host cytoplasm</location>
    </subcellularLocation>
</comment>
<comment type="domain">
    <text evidence="6">The RxLR-dEER motif acts to carry the protein into the host cell cytoplasm through binding to cell surface phosphatidylinositol-3-phosphate.</text>
</comment>
<comment type="similarity">
    <text evidence="5">Belongs to the RxLR effector family.</text>
</comment>
<proteinExistence type="evidence at transcript level"/>
<evidence type="ECO:0000255" key="1"/>
<evidence type="ECO:0000256" key="2">
    <source>
        <dbReference type="SAM" id="MobiDB-lite"/>
    </source>
</evidence>
<evidence type="ECO:0000269" key="3">
    <source>
    </source>
</evidence>
<evidence type="ECO:0000303" key="4">
    <source>
    </source>
</evidence>
<evidence type="ECO:0000305" key="5"/>
<evidence type="ECO:0000305" key="6">
    <source>
    </source>
</evidence>
<protein>
    <recommendedName>
        <fullName evidence="4">Secreted RxLR effector protein 6</fullName>
    </recommendedName>
</protein>
<feature type="signal peptide" evidence="1">
    <location>
        <begin position="1"/>
        <end position="19"/>
    </location>
</feature>
<feature type="chain" id="PRO_0000447902" description="Secreted RxLR effector protein 6">
    <location>
        <begin position="20"/>
        <end position="268"/>
    </location>
</feature>
<feature type="region of interest" description="Disordered" evidence="2">
    <location>
        <begin position="90"/>
        <end position="123"/>
    </location>
</feature>
<feature type="short sequence motif" description="RxLR-dEER" evidence="6">
    <location>
        <begin position="48"/>
        <end position="63"/>
    </location>
</feature>
<feature type="compositionally biased region" description="Polar residues" evidence="2">
    <location>
        <begin position="107"/>
        <end position="123"/>
    </location>
</feature>
<reference key="1">
    <citation type="journal article" date="2018" name="Front. Plant Sci.">
        <title>In planta functional analysis and subcellular localization of the oomycete pathogen Plasmopara viticola candidate RXLR effector repertoire.</title>
        <authorList>
            <person name="Liu Y."/>
            <person name="Lan X."/>
            <person name="Song S."/>
            <person name="Yin L."/>
            <person name="Dry I.B."/>
            <person name="Qu J."/>
            <person name="Xiang J."/>
            <person name="Lu J."/>
        </authorList>
    </citation>
    <scope>NUCLEOTIDE SEQUENCE [MRNA]</scope>
    <scope>DOMAIN</scope>
    <scope>FUNCTION</scope>
    <scope>SUBCELLULAR LOCATION</scope>
</reference>
<organism>
    <name type="scientific">Plasmopara viticola</name>
    <name type="common">Downy mildew of grapevine</name>
    <name type="synonym">Botrytis viticola</name>
    <dbReference type="NCBI Taxonomy" id="143451"/>
    <lineage>
        <taxon>Eukaryota</taxon>
        <taxon>Sar</taxon>
        <taxon>Stramenopiles</taxon>
        <taxon>Oomycota</taxon>
        <taxon>Peronosporales</taxon>
        <taxon>Peronosporaceae</taxon>
        <taxon>Plasmopara</taxon>
    </lineage>
</organism>